<proteinExistence type="evidence at transcript level"/>
<comment type="function">
    <text evidence="2">Synthesizes selenophosphate from selenide and ATP.</text>
</comment>
<comment type="catalytic activity">
    <reaction evidence="2">
        <text>hydrogenselenide + ATP + H2O = selenophosphate + AMP + phosphate + 2 H(+)</text>
        <dbReference type="Rhea" id="RHEA:18737"/>
        <dbReference type="ChEBI" id="CHEBI:15377"/>
        <dbReference type="ChEBI" id="CHEBI:15378"/>
        <dbReference type="ChEBI" id="CHEBI:16144"/>
        <dbReference type="ChEBI" id="CHEBI:29317"/>
        <dbReference type="ChEBI" id="CHEBI:30616"/>
        <dbReference type="ChEBI" id="CHEBI:43474"/>
        <dbReference type="ChEBI" id="CHEBI:456215"/>
        <dbReference type="EC" id="2.7.9.3"/>
    </reaction>
</comment>
<comment type="cofactor">
    <cofactor evidence="2">
        <name>Mg(2+)</name>
        <dbReference type="ChEBI" id="CHEBI:18420"/>
    </cofactor>
    <text evidence="2">Binds 1 Mg(2+) ion per monomer.</text>
</comment>
<comment type="subunit">
    <text evidence="2">Homodimer.</text>
</comment>
<comment type="subcellular location">
    <subcellularLocation>
        <location evidence="2">Cell membrane</location>
        <topology evidence="4">Peripheral membrane protein</topology>
    </subcellularLocation>
    <subcellularLocation>
        <location evidence="2">Nucleus membrane</location>
        <topology evidence="4">Peripheral membrane protein</topology>
    </subcellularLocation>
</comment>
<comment type="similarity">
    <text evidence="4">Belongs to the selenophosphate synthase 1 family. Class II subfamily.</text>
</comment>
<comment type="caution">
    <text evidence="4">The conserved active site Cys (or selenocysteine) residue in position 29 is replaced by a Thr. However, as function in selenoprotein synthesis is probable, it is possible Cys-31 is the active site.</text>
</comment>
<gene>
    <name type="primary">SEPHS1</name>
</gene>
<organism>
    <name type="scientific">Pongo abelii</name>
    <name type="common">Sumatran orangutan</name>
    <name type="synonym">Pongo pygmaeus abelii</name>
    <dbReference type="NCBI Taxonomy" id="9601"/>
    <lineage>
        <taxon>Eukaryota</taxon>
        <taxon>Metazoa</taxon>
        <taxon>Chordata</taxon>
        <taxon>Craniata</taxon>
        <taxon>Vertebrata</taxon>
        <taxon>Euteleostomi</taxon>
        <taxon>Mammalia</taxon>
        <taxon>Eutheria</taxon>
        <taxon>Euarchontoglires</taxon>
        <taxon>Primates</taxon>
        <taxon>Haplorrhini</taxon>
        <taxon>Catarrhini</taxon>
        <taxon>Hominidae</taxon>
        <taxon>Pongo</taxon>
    </lineage>
</organism>
<reference key="1">
    <citation type="submission" date="2004-11" db="EMBL/GenBank/DDBJ databases">
        <authorList>
            <consortium name="The German cDNA consortium"/>
        </authorList>
    </citation>
    <scope>NUCLEOTIDE SEQUENCE [LARGE SCALE MRNA]</scope>
    <source>
        <tissue>Kidney</tissue>
    </source>
</reference>
<evidence type="ECO:0000250" key="1">
    <source>
        <dbReference type="UniProtKB" id="P16456"/>
    </source>
</evidence>
<evidence type="ECO:0000250" key="2">
    <source>
        <dbReference type="UniProtKB" id="P49903"/>
    </source>
</evidence>
<evidence type="ECO:0000255" key="3"/>
<evidence type="ECO:0000305" key="4"/>
<keyword id="KW-0007">Acetylation</keyword>
<keyword id="KW-0067">ATP-binding</keyword>
<keyword id="KW-1003">Cell membrane</keyword>
<keyword id="KW-0418">Kinase</keyword>
<keyword id="KW-0460">Magnesium</keyword>
<keyword id="KW-0472">Membrane</keyword>
<keyword id="KW-0479">Metal-binding</keyword>
<keyword id="KW-0547">Nucleotide-binding</keyword>
<keyword id="KW-0539">Nucleus</keyword>
<keyword id="KW-1185">Reference proteome</keyword>
<keyword id="KW-0711">Selenium</keyword>
<keyword id="KW-0808">Transferase</keyword>
<dbReference type="EC" id="2.7.9.3" evidence="2"/>
<dbReference type="EMBL" id="CR857274">
    <property type="protein sequence ID" value="CAH89570.1"/>
    <property type="molecule type" value="mRNA"/>
</dbReference>
<dbReference type="RefSeq" id="NP_001124690.1">
    <property type="nucleotide sequence ID" value="NM_001131218.1"/>
</dbReference>
<dbReference type="RefSeq" id="XP_054377336.1">
    <property type="nucleotide sequence ID" value="XM_054521361.2"/>
</dbReference>
<dbReference type="SMR" id="Q5RF87"/>
<dbReference type="FunCoup" id="Q5RF87">
    <property type="interactions" value="1513"/>
</dbReference>
<dbReference type="STRING" id="9601.ENSPPYP00000002437"/>
<dbReference type="Ensembl" id="ENSPPYT00000053266.1">
    <property type="protein sequence ID" value="ENSPPYP00000032727.1"/>
    <property type="gene ID" value="ENSPPYG00000002099.3"/>
</dbReference>
<dbReference type="GeneID" id="100171537"/>
<dbReference type="KEGG" id="pon:100171537"/>
<dbReference type="CTD" id="22929"/>
<dbReference type="eggNOG" id="KOG3939">
    <property type="taxonomic scope" value="Eukaryota"/>
</dbReference>
<dbReference type="GeneTree" id="ENSGT00390000000950"/>
<dbReference type="InParanoid" id="Q5RF87"/>
<dbReference type="OMA" id="LARDWMC"/>
<dbReference type="OrthoDB" id="9471920at2759"/>
<dbReference type="Proteomes" id="UP000001595">
    <property type="component" value="Chromosome 10"/>
</dbReference>
<dbReference type="GO" id="GO:0005737">
    <property type="term" value="C:cytoplasm"/>
    <property type="evidence" value="ECO:0007669"/>
    <property type="project" value="TreeGrafter"/>
</dbReference>
<dbReference type="GO" id="GO:0031965">
    <property type="term" value="C:nuclear membrane"/>
    <property type="evidence" value="ECO:0000250"/>
    <property type="project" value="UniProtKB"/>
</dbReference>
<dbReference type="GO" id="GO:0005886">
    <property type="term" value="C:plasma membrane"/>
    <property type="evidence" value="ECO:0000250"/>
    <property type="project" value="UniProtKB"/>
</dbReference>
<dbReference type="GO" id="GO:0005524">
    <property type="term" value="F:ATP binding"/>
    <property type="evidence" value="ECO:0007669"/>
    <property type="project" value="UniProtKB-KW"/>
</dbReference>
<dbReference type="GO" id="GO:0046872">
    <property type="term" value="F:metal ion binding"/>
    <property type="evidence" value="ECO:0007669"/>
    <property type="project" value="UniProtKB-KW"/>
</dbReference>
<dbReference type="GO" id="GO:0046982">
    <property type="term" value="F:protein heterodimerization activity"/>
    <property type="evidence" value="ECO:0000250"/>
    <property type="project" value="UniProtKB"/>
</dbReference>
<dbReference type="GO" id="GO:0042803">
    <property type="term" value="F:protein homodimerization activity"/>
    <property type="evidence" value="ECO:0000250"/>
    <property type="project" value="UniProtKB"/>
</dbReference>
<dbReference type="GO" id="GO:0004756">
    <property type="term" value="F:selenide, water dikinase activity"/>
    <property type="evidence" value="ECO:0007669"/>
    <property type="project" value="UniProtKB-EC"/>
</dbReference>
<dbReference type="GO" id="GO:0016260">
    <property type="term" value="P:selenocysteine biosynthetic process"/>
    <property type="evidence" value="ECO:0007669"/>
    <property type="project" value="TreeGrafter"/>
</dbReference>
<dbReference type="CDD" id="cd02195">
    <property type="entry name" value="SelD"/>
    <property type="match status" value="1"/>
</dbReference>
<dbReference type="FunFam" id="3.30.1330.10:FF:000006">
    <property type="entry name" value="Selenide water dikinase 1"/>
    <property type="match status" value="1"/>
</dbReference>
<dbReference type="FunFam" id="3.90.650.10:FF:000003">
    <property type="entry name" value="Selenide, water dikinase 1"/>
    <property type="match status" value="1"/>
</dbReference>
<dbReference type="Gene3D" id="3.90.650.10">
    <property type="entry name" value="PurM-like C-terminal domain"/>
    <property type="match status" value="1"/>
</dbReference>
<dbReference type="Gene3D" id="3.30.1330.10">
    <property type="entry name" value="PurM-like, N-terminal domain"/>
    <property type="match status" value="1"/>
</dbReference>
<dbReference type="InterPro" id="IPR010918">
    <property type="entry name" value="PurM-like_C_dom"/>
</dbReference>
<dbReference type="InterPro" id="IPR036676">
    <property type="entry name" value="PurM-like_C_sf"/>
</dbReference>
<dbReference type="InterPro" id="IPR016188">
    <property type="entry name" value="PurM-like_N"/>
</dbReference>
<dbReference type="InterPro" id="IPR036921">
    <property type="entry name" value="PurM-like_N_sf"/>
</dbReference>
<dbReference type="InterPro" id="IPR004536">
    <property type="entry name" value="SPS/SelD"/>
</dbReference>
<dbReference type="NCBIfam" id="TIGR00476">
    <property type="entry name" value="selD"/>
    <property type="match status" value="1"/>
</dbReference>
<dbReference type="PANTHER" id="PTHR10256">
    <property type="entry name" value="SELENIDE, WATER DIKINASE"/>
    <property type="match status" value="1"/>
</dbReference>
<dbReference type="PANTHER" id="PTHR10256:SF2">
    <property type="entry name" value="SELENIDE, WATER DIKINASE 1"/>
    <property type="match status" value="1"/>
</dbReference>
<dbReference type="Pfam" id="PF00586">
    <property type="entry name" value="AIRS"/>
    <property type="match status" value="1"/>
</dbReference>
<dbReference type="Pfam" id="PF02769">
    <property type="entry name" value="AIRS_C"/>
    <property type="match status" value="1"/>
</dbReference>
<dbReference type="PIRSF" id="PIRSF036407">
    <property type="entry name" value="Selenphspht_syn"/>
    <property type="match status" value="1"/>
</dbReference>
<dbReference type="SUPFAM" id="SSF56042">
    <property type="entry name" value="PurM C-terminal domain-like"/>
    <property type="match status" value="1"/>
</dbReference>
<dbReference type="SUPFAM" id="SSF55326">
    <property type="entry name" value="PurM N-terminal domain-like"/>
    <property type="match status" value="1"/>
</dbReference>
<name>SPS1_PONAB</name>
<accession>Q5RF87</accession>
<feature type="initiator methionine" description="Removed" evidence="2">
    <location>
        <position position="1"/>
    </location>
</feature>
<feature type="chain" id="PRO_0000312507" description="Selenide, water dikinase 1">
    <location>
        <begin position="2"/>
        <end position="392"/>
    </location>
</feature>
<feature type="active site" evidence="3">
    <location>
        <position position="31"/>
    </location>
</feature>
<feature type="binding site" description="in other chain" evidence="2">
    <location>
        <position position="32"/>
    </location>
    <ligand>
        <name>ATP</name>
        <dbReference type="ChEBI" id="CHEBI:30616"/>
        <note>ligand shared between dimeric partners</note>
    </ligand>
</feature>
<feature type="binding site" description="in other chain" evidence="2">
    <location>
        <begin position="67"/>
        <end position="69"/>
    </location>
    <ligand>
        <name>ATP</name>
        <dbReference type="ChEBI" id="CHEBI:30616"/>
        <note>ligand shared between dimeric partners</note>
    </ligand>
</feature>
<feature type="binding site" evidence="2">
    <location>
        <position position="69"/>
    </location>
    <ligand>
        <name>Mg(2+)</name>
        <dbReference type="ChEBI" id="CHEBI:18420"/>
    </ligand>
</feature>
<feature type="binding site" description="in other chain" evidence="2">
    <location>
        <position position="87"/>
    </location>
    <ligand>
        <name>ATP</name>
        <dbReference type="ChEBI" id="CHEBI:30616"/>
        <note>ligand shared between dimeric partners</note>
    </ligand>
</feature>
<feature type="binding site" description="in other chain" evidence="2">
    <location>
        <position position="110"/>
    </location>
    <ligand>
        <name>ATP</name>
        <dbReference type="ChEBI" id="CHEBI:30616"/>
        <note>ligand shared between dimeric partners</note>
    </ligand>
</feature>
<feature type="binding site" evidence="2">
    <location>
        <position position="110"/>
    </location>
    <ligand>
        <name>Mg(2+)</name>
        <dbReference type="ChEBI" id="CHEBI:18420"/>
    </ligand>
</feature>
<feature type="binding site" evidence="2">
    <location>
        <begin position="161"/>
        <end position="164"/>
    </location>
    <ligand>
        <name>ATP</name>
        <dbReference type="ChEBI" id="CHEBI:30616"/>
        <note>ligand shared between dimeric partners</note>
    </ligand>
</feature>
<feature type="binding site" evidence="2">
    <location>
        <position position="265"/>
    </location>
    <ligand>
        <name>Mg(2+)</name>
        <dbReference type="ChEBI" id="CHEBI:18420"/>
    </ligand>
</feature>
<feature type="site" description="Important for catalytic activity" evidence="1">
    <location>
        <position position="32"/>
    </location>
</feature>
<feature type="modified residue" description="N-acetylserine" evidence="2">
    <location>
        <position position="2"/>
    </location>
</feature>
<protein>
    <recommendedName>
        <fullName>Selenide, water dikinase 1</fullName>
        <ecNumber evidence="2">2.7.9.3</ecNumber>
    </recommendedName>
    <alternativeName>
        <fullName>Selenium donor protein 1</fullName>
    </alternativeName>
    <alternativeName>
        <fullName>Selenophosphate synthase 1</fullName>
    </alternativeName>
</protein>
<sequence length="392" mass="42911">MSTRESFNPESYELDKSFRLTRFTELKGTGCKVPQDVLQKLLESLQENHFQEDEQFLGAVMPRLGIGMDTCVIPLRHGGLSLVQTTDYIYPIVDDPYMMGRIACANVLSDLYAMGVTECDNMLMLLGVSNKMTDRERDKVMPLIIQGFKDAAEEAGTSVTGGQTVLNPWIVLGGVATTVCQPNEFIMPDNAVPGDVLVLTKPLGTQVAVAVHQWLDIPEKWNKIKLVVTQEDVELAYQEAMMNMARLNRTAAGLMHTFNAHAATDITGFGILGHAQNLAKQQRNEVSFVIHNLPVLAKMAAVSKACGNMFGLMHGTCPETSGGLLICLPREQAARFCAEIKSPKYGEGHQAWIIGIVEKGNRTARIIDKPRIIEVAPQVATQNVNPTPGATS</sequence>